<proteinExistence type="evidence at transcript level"/>
<comment type="function">
    <text evidence="1">Protein with different functions depending on its subcellular location: involved in miRNA processing in the nucleus and acts as a tRNA pseudouridylate synthase in the cytoplasm. In the cytoplasm, acts as a pseudouridylate synthase by catalyzing synthesis of pseudouridine(54) and pseudouridine(55) from uracil-54 and uracil-55, respectively, in the psi GC loop of a subset of tRNAs. tRNA pseudouridylate synthase activity is enhanced by the presence of 1-methyladenosine at position 53-61 of tRNAs. Does not show tRNA pseudouridylate synthase activity in the nucleus. In the nucleus, promotes primary microRNAs (pri-miRNAs) processing independently of its RNA pseudouridylate synthase activity. Binds pri-miRNAs.</text>
</comment>
<comment type="catalytic activity">
    <reaction evidence="1">
        <text>uridine(55) in tRNA = pseudouridine(55) in tRNA</text>
        <dbReference type="Rhea" id="RHEA:42532"/>
        <dbReference type="Rhea" id="RHEA-COMP:10101"/>
        <dbReference type="Rhea" id="RHEA-COMP:10102"/>
        <dbReference type="ChEBI" id="CHEBI:65314"/>
        <dbReference type="ChEBI" id="CHEBI:65315"/>
        <dbReference type="EC" id="5.4.99.25"/>
    </reaction>
    <physiologicalReaction direction="left-to-right" evidence="1">
        <dbReference type="Rhea" id="RHEA:42533"/>
    </physiologicalReaction>
</comment>
<comment type="catalytic activity">
    <reaction evidence="1">
        <text>uridine(54) in tRNA = pseudouridine(54) in tRNA</text>
        <dbReference type="Rhea" id="RHEA:57876"/>
        <dbReference type="Rhea" id="RHEA-COMP:10193"/>
        <dbReference type="Rhea" id="RHEA-COMP:14141"/>
        <dbReference type="ChEBI" id="CHEBI:65314"/>
        <dbReference type="ChEBI" id="CHEBI:65315"/>
    </reaction>
    <physiologicalReaction direction="left-to-right" evidence="1">
        <dbReference type="Rhea" id="RHEA:57877"/>
    </physiologicalReaction>
</comment>
<comment type="subcellular location">
    <subcellularLocation>
        <location evidence="1">Nucleus</location>
    </subcellularLocation>
    <subcellularLocation>
        <location evidence="1">Cytoplasm</location>
    </subcellularLocation>
    <subcellularLocation>
        <location evidence="1">Mitochondrion</location>
    </subcellularLocation>
    <text evidence="1">Localizes mainly in the nucleus. tRNA pseudouridylate synthase activity is restricted to the cytoplasm.</text>
</comment>
<comment type="similarity">
    <text evidence="4">Belongs to the pseudouridine synthase Pus10 family.</text>
</comment>
<name>PUS10_XENLA</name>
<reference key="1">
    <citation type="submission" date="2004-06" db="EMBL/GenBank/DDBJ databases">
        <authorList>
            <consortium name="NIH - Xenopus Gene Collection (XGC) project"/>
        </authorList>
    </citation>
    <scope>NUCLEOTIDE SEQUENCE [LARGE SCALE MRNA]</scope>
    <source>
        <tissue>Ovary</tissue>
    </source>
</reference>
<organism>
    <name type="scientific">Xenopus laevis</name>
    <name type="common">African clawed frog</name>
    <dbReference type="NCBI Taxonomy" id="8355"/>
    <lineage>
        <taxon>Eukaryota</taxon>
        <taxon>Metazoa</taxon>
        <taxon>Chordata</taxon>
        <taxon>Craniata</taxon>
        <taxon>Vertebrata</taxon>
        <taxon>Euteleostomi</taxon>
        <taxon>Amphibia</taxon>
        <taxon>Batrachia</taxon>
        <taxon>Anura</taxon>
        <taxon>Pipoidea</taxon>
        <taxon>Pipidae</taxon>
        <taxon>Xenopodinae</taxon>
        <taxon>Xenopus</taxon>
        <taxon>Xenopus</taxon>
    </lineage>
</organism>
<sequence length="515" mass="58590">MLLIEEKYRSVAQVLLSSGTCSRCVLRFCCVGSPANYRLPCKEVTYELQKYLSHGDPAEENDTPPSKKAKIEEDTSSNEHLGNCEDVNGSQVVRICPLCLGILQQFCEPEFIEKVFVKINSAVYELKDFVLSISLPAQLSVREHSAWLQAKQEMGKHGHSLDKTDIVQLKEAYKWIIHPLLSDQLGIQADSKSLFEVAVVFTHPETDGDCHFLATVCRDCFKPTKNKQSVFTRMAVVKALEKIKEEDFRVQFPFPPSSPETTCEVVDIQCNHSPVFVAGRYNKYSRNLPQTPWIIDGERKIESSVEELITDHLVAAFRSSSFNFSSSGREDVDVRTLGKGRPFAIELLNPHKVQFTGQEIKALQQKINTSDKIKVRDLQIVSREAVAHMKEGEEEKTKCYCALIWIEKMVRNEDLQLLDGLEELTIAQKTPLRVLHRRPLASRSRTIHTMRTEYVDEHHFRLYLKTQAGTYIKEFVHGDFGRTKPNVGSIMETNADILELDVESVDVDWPPSLDD</sequence>
<accession>Q6ING2</accession>
<evidence type="ECO:0000250" key="1">
    <source>
        <dbReference type="UniProtKB" id="Q3MIT2"/>
    </source>
</evidence>
<evidence type="ECO:0000255" key="2"/>
<evidence type="ECO:0000256" key="3">
    <source>
        <dbReference type="SAM" id="MobiDB-lite"/>
    </source>
</evidence>
<evidence type="ECO:0000305" key="4"/>
<keyword id="KW-0175">Coiled coil</keyword>
<keyword id="KW-0963">Cytoplasm</keyword>
<keyword id="KW-0413">Isomerase</keyword>
<keyword id="KW-0479">Metal-binding</keyword>
<keyword id="KW-0496">Mitochondrion</keyword>
<keyword id="KW-0539">Nucleus</keyword>
<keyword id="KW-1185">Reference proteome</keyword>
<keyword id="KW-0819">tRNA processing</keyword>
<keyword id="KW-0862">Zinc</keyword>
<dbReference type="EC" id="5.4.99.25" evidence="1"/>
<dbReference type="EMBL" id="BC072319">
    <property type="protein sequence ID" value="AAH72319.1"/>
    <property type="molecule type" value="mRNA"/>
</dbReference>
<dbReference type="RefSeq" id="NP_001085415.1">
    <property type="nucleotide sequence ID" value="NM_001091946.1"/>
</dbReference>
<dbReference type="SMR" id="Q6ING2"/>
<dbReference type="DNASU" id="443841"/>
<dbReference type="GeneID" id="443841"/>
<dbReference type="KEGG" id="xla:443841"/>
<dbReference type="AGR" id="Xenbase:XB-GENE-5903783"/>
<dbReference type="CTD" id="443841"/>
<dbReference type="Xenbase" id="XB-GENE-5903783">
    <property type="gene designation" value="pus10.S"/>
</dbReference>
<dbReference type="OrthoDB" id="271937at2759"/>
<dbReference type="Proteomes" id="UP000186698">
    <property type="component" value="Chromosome 5S"/>
</dbReference>
<dbReference type="Bgee" id="443841">
    <property type="expression patterns" value="Expressed in oocyte and 19 other cell types or tissues"/>
</dbReference>
<dbReference type="GO" id="GO:0005737">
    <property type="term" value="C:cytoplasm"/>
    <property type="evidence" value="ECO:0000250"/>
    <property type="project" value="UniProtKB"/>
</dbReference>
<dbReference type="GO" id="GO:0005739">
    <property type="term" value="C:mitochondrion"/>
    <property type="evidence" value="ECO:0007669"/>
    <property type="project" value="UniProtKB-SubCell"/>
</dbReference>
<dbReference type="GO" id="GO:0005634">
    <property type="term" value="C:nucleus"/>
    <property type="evidence" value="ECO:0000250"/>
    <property type="project" value="UniProtKB"/>
</dbReference>
<dbReference type="GO" id="GO:0046872">
    <property type="term" value="F:metal ion binding"/>
    <property type="evidence" value="ECO:0007669"/>
    <property type="project" value="UniProtKB-KW"/>
</dbReference>
<dbReference type="GO" id="GO:0070878">
    <property type="term" value="F:primary miRNA binding"/>
    <property type="evidence" value="ECO:0000250"/>
    <property type="project" value="UniProtKB"/>
</dbReference>
<dbReference type="GO" id="GO:0009982">
    <property type="term" value="F:pseudouridine synthase activity"/>
    <property type="evidence" value="ECO:0000250"/>
    <property type="project" value="UniProtKB"/>
</dbReference>
<dbReference type="GO" id="GO:0106029">
    <property type="term" value="F:tRNA pseudouridine synthase activity"/>
    <property type="evidence" value="ECO:0000250"/>
    <property type="project" value="UniProtKB"/>
</dbReference>
<dbReference type="GO" id="GO:0160148">
    <property type="term" value="F:tRNA pseudouridine(55) synthase activity"/>
    <property type="evidence" value="ECO:0007669"/>
    <property type="project" value="UniProtKB-EC"/>
</dbReference>
<dbReference type="GO" id="GO:0031053">
    <property type="term" value="P:primary miRNA processing"/>
    <property type="evidence" value="ECO:0000250"/>
    <property type="project" value="UniProtKB"/>
</dbReference>
<dbReference type="GO" id="GO:0031119">
    <property type="term" value="P:tRNA pseudouridine synthesis"/>
    <property type="evidence" value="ECO:0000250"/>
    <property type="project" value="UniProtKB"/>
</dbReference>
<dbReference type="FunFam" id="1.10.10.2050:FF:000001">
    <property type="entry name" value="putative tRNA pseudouridine synthase Pus10"/>
    <property type="match status" value="1"/>
</dbReference>
<dbReference type="FunFam" id="3.30.70.2510:FF:000001">
    <property type="entry name" value="tRNA pseudouridine synthase Pus10"/>
    <property type="match status" value="1"/>
</dbReference>
<dbReference type="FunFam" id="3.30.70.3190:FF:000001">
    <property type="entry name" value="tRNA pseudouridine synthase Pus10"/>
    <property type="match status" value="1"/>
</dbReference>
<dbReference type="Gene3D" id="1.10.10.2050">
    <property type="match status" value="1"/>
</dbReference>
<dbReference type="Gene3D" id="3.30.70.2510">
    <property type="match status" value="1"/>
</dbReference>
<dbReference type="Gene3D" id="3.30.70.3190">
    <property type="match status" value="1"/>
</dbReference>
<dbReference type="InterPro" id="IPR020103">
    <property type="entry name" value="PsdUridine_synth_cat_dom_sf"/>
</dbReference>
<dbReference type="InterPro" id="IPR039894">
    <property type="entry name" value="Pus10-like"/>
</dbReference>
<dbReference type="InterPro" id="IPR048741">
    <property type="entry name" value="Pus10-like_C"/>
</dbReference>
<dbReference type="InterPro" id="IPR048742">
    <property type="entry name" value="Pus10_N_euk"/>
</dbReference>
<dbReference type="NCBIfam" id="TIGR01213">
    <property type="entry name" value="pseudo_Pus10arc"/>
    <property type="match status" value="1"/>
</dbReference>
<dbReference type="PANTHER" id="PTHR21568">
    <property type="entry name" value="TRNA PSEUDOURIDINE SYNTHASE PUS10"/>
    <property type="match status" value="1"/>
</dbReference>
<dbReference type="PANTHER" id="PTHR21568:SF0">
    <property type="entry name" value="TRNA PSEUDOURIDINE SYNTHASE PUS10"/>
    <property type="match status" value="1"/>
</dbReference>
<dbReference type="Pfam" id="PF21238">
    <property type="entry name" value="Pus10_C"/>
    <property type="match status" value="1"/>
</dbReference>
<dbReference type="Pfam" id="PF21237">
    <property type="entry name" value="Pus10_N_euk"/>
    <property type="match status" value="1"/>
</dbReference>
<dbReference type="SUPFAM" id="SSF55120">
    <property type="entry name" value="Pseudouridine synthase"/>
    <property type="match status" value="1"/>
</dbReference>
<protein>
    <recommendedName>
        <fullName>tRNA pseudouridine synthase Pus10</fullName>
        <ecNumber evidence="1">5.4.99.25</ecNumber>
    </recommendedName>
    <alternativeName>
        <fullName>tRNA pseudouridine 55 synthase</fullName>
        <shortName>Psi55 synthase</shortName>
    </alternativeName>
    <alternativeName>
        <fullName>tRNA pseudouridylate synthase</fullName>
    </alternativeName>
    <alternativeName>
        <fullName>tRNA-uridine isomerase</fullName>
    </alternativeName>
</protein>
<feature type="chain" id="PRO_0000299024" description="tRNA pseudouridine synthase Pus10">
    <location>
        <begin position="1"/>
        <end position="515"/>
    </location>
</feature>
<feature type="region of interest" description="Disordered" evidence="3">
    <location>
        <begin position="55"/>
        <end position="82"/>
    </location>
</feature>
<feature type="region of interest" description="RNA binding forefinger loop" evidence="2">
    <location>
        <begin position="291"/>
        <end position="304"/>
    </location>
</feature>
<feature type="region of interest" description="RNA binding thumb loop" evidence="2">
    <location>
        <begin position="428"/>
        <end position="443"/>
    </location>
</feature>
<feature type="coiled-coil region" evidence="2">
    <location>
        <begin position="42"/>
        <end position="85"/>
    </location>
</feature>
<feature type="active site" description="Nucleophile" evidence="2">
    <location>
        <position position="331"/>
    </location>
</feature>
<feature type="binding site" evidence="1">
    <location>
        <position position="21"/>
    </location>
    <ligand>
        <name>Zn(2+)</name>
        <dbReference type="ChEBI" id="CHEBI:29105"/>
    </ligand>
</feature>
<feature type="binding site" evidence="1">
    <location>
        <position position="24"/>
    </location>
    <ligand>
        <name>Zn(2+)</name>
        <dbReference type="ChEBI" id="CHEBI:29105"/>
    </ligand>
</feature>
<feature type="binding site" evidence="1">
    <location>
        <position position="96"/>
    </location>
    <ligand>
        <name>Zn(2+)</name>
        <dbReference type="ChEBI" id="CHEBI:29105"/>
    </ligand>
</feature>
<feature type="binding site" evidence="1">
    <location>
        <position position="99"/>
    </location>
    <ligand>
        <name>Zn(2+)</name>
        <dbReference type="ChEBI" id="CHEBI:29105"/>
    </ligand>
</feature>
<gene>
    <name evidence="1" type="primary">pus10</name>
</gene>